<organism>
    <name type="scientific">Porphyromonas gingivalis (strain ATCC 33277 / DSM 20709 / CIP 103683 / JCM 12257 / NCTC 11834 / 2561)</name>
    <dbReference type="NCBI Taxonomy" id="431947"/>
    <lineage>
        <taxon>Bacteria</taxon>
        <taxon>Pseudomonadati</taxon>
        <taxon>Bacteroidota</taxon>
        <taxon>Bacteroidia</taxon>
        <taxon>Bacteroidales</taxon>
        <taxon>Porphyromonadaceae</taxon>
        <taxon>Porphyromonas</taxon>
    </lineage>
</organism>
<evidence type="ECO:0000255" key="1">
    <source>
        <dbReference type="HAMAP-Rule" id="MF_01454"/>
    </source>
</evidence>
<evidence type="ECO:0000255" key="2">
    <source>
        <dbReference type="PROSITE-ProRule" id="PRU01231"/>
    </source>
</evidence>
<evidence type="ECO:0000256" key="3">
    <source>
        <dbReference type="SAM" id="MobiDB-lite"/>
    </source>
</evidence>
<accession>B2RIY7</accession>
<keyword id="KW-0963">Cytoplasm</keyword>
<keyword id="KW-0342">GTP-binding</keyword>
<keyword id="KW-0378">Hydrolase</keyword>
<keyword id="KW-0460">Magnesium</keyword>
<keyword id="KW-0479">Metal-binding</keyword>
<keyword id="KW-0547">Nucleotide-binding</keyword>
<protein>
    <recommendedName>
        <fullName evidence="1">GTPase Obg</fullName>
        <ecNumber evidence="1">3.6.5.-</ecNumber>
    </recommendedName>
    <alternativeName>
        <fullName evidence="1">GTP-binding protein Obg</fullName>
    </alternativeName>
</protein>
<name>OBG_PORG3</name>
<gene>
    <name evidence="1" type="primary">obg</name>
    <name type="ordered locus">PGN_0813</name>
</gene>
<reference key="1">
    <citation type="journal article" date="2008" name="DNA Res.">
        <title>Determination of the genome sequence of Porphyromonas gingivalis strain ATCC 33277 and genomic comparison with strain W83 revealed extensive genome rearrangements in P. gingivalis.</title>
        <authorList>
            <person name="Naito M."/>
            <person name="Hirakawa H."/>
            <person name="Yamashita A."/>
            <person name="Ohara N."/>
            <person name="Shoji M."/>
            <person name="Yukitake H."/>
            <person name="Nakayama K."/>
            <person name="Toh H."/>
            <person name="Yoshimura F."/>
            <person name="Kuhara S."/>
            <person name="Hattori M."/>
            <person name="Hayashi T."/>
            <person name="Nakayama K."/>
        </authorList>
    </citation>
    <scope>NUCLEOTIDE SEQUENCE [LARGE SCALE GENOMIC DNA]</scope>
    <source>
        <strain>ATCC 33277 / DSM 20709 / CIP 103683 / JCM 12257 / NCTC 11834 / 2561</strain>
    </source>
</reference>
<proteinExistence type="inferred from homology"/>
<feature type="chain" id="PRO_0000386130" description="GTPase Obg">
    <location>
        <begin position="1"/>
        <end position="394"/>
    </location>
</feature>
<feature type="domain" description="Obg" evidence="2">
    <location>
        <begin position="5"/>
        <end position="163"/>
    </location>
</feature>
<feature type="domain" description="OBG-type G" evidence="1">
    <location>
        <begin position="164"/>
        <end position="330"/>
    </location>
</feature>
<feature type="region of interest" description="Disordered" evidence="3">
    <location>
        <begin position="26"/>
        <end position="45"/>
    </location>
</feature>
<feature type="binding site" evidence="1">
    <location>
        <begin position="170"/>
        <end position="177"/>
    </location>
    <ligand>
        <name>GTP</name>
        <dbReference type="ChEBI" id="CHEBI:37565"/>
    </ligand>
</feature>
<feature type="binding site" evidence="1">
    <location>
        <position position="177"/>
    </location>
    <ligand>
        <name>Mg(2+)</name>
        <dbReference type="ChEBI" id="CHEBI:18420"/>
    </ligand>
</feature>
<feature type="binding site" evidence="1">
    <location>
        <begin position="195"/>
        <end position="199"/>
    </location>
    <ligand>
        <name>GTP</name>
        <dbReference type="ChEBI" id="CHEBI:37565"/>
    </ligand>
</feature>
<feature type="binding site" evidence="1">
    <location>
        <position position="197"/>
    </location>
    <ligand>
        <name>Mg(2+)</name>
        <dbReference type="ChEBI" id="CHEBI:18420"/>
    </ligand>
</feature>
<feature type="binding site" evidence="1">
    <location>
        <begin position="217"/>
        <end position="220"/>
    </location>
    <ligand>
        <name>GTP</name>
        <dbReference type="ChEBI" id="CHEBI:37565"/>
    </ligand>
</feature>
<feature type="binding site" evidence="1">
    <location>
        <begin position="284"/>
        <end position="287"/>
    </location>
    <ligand>
        <name>GTP</name>
        <dbReference type="ChEBI" id="CHEBI:37565"/>
    </ligand>
</feature>
<feature type="binding site" evidence="1">
    <location>
        <begin position="311"/>
        <end position="313"/>
    </location>
    <ligand>
        <name>GTP</name>
        <dbReference type="ChEBI" id="CHEBI:37565"/>
    </ligand>
</feature>
<comment type="function">
    <text evidence="1">An essential GTPase which binds GTP, GDP and possibly (p)ppGpp with moderate affinity, with high nucleotide exchange rates and a fairly low GTP hydrolysis rate. Plays a role in control of the cell cycle, stress response, ribosome biogenesis and in those bacteria that undergo differentiation, in morphogenesis control.</text>
</comment>
<comment type="cofactor">
    <cofactor evidence="1">
        <name>Mg(2+)</name>
        <dbReference type="ChEBI" id="CHEBI:18420"/>
    </cofactor>
</comment>
<comment type="subunit">
    <text evidence="1">Monomer.</text>
</comment>
<comment type="subcellular location">
    <subcellularLocation>
        <location evidence="1">Cytoplasm</location>
    </subcellularLocation>
</comment>
<comment type="similarity">
    <text evidence="1">Belongs to the TRAFAC class OBG-HflX-like GTPase superfamily. OBG GTPase family.</text>
</comment>
<sequence length="394" mass="43601">MAAESNFVDYVKIYCRSGKGGRGSTHFRREKYIPKGGPDGGDGGRGGHVFLRGNRNYWTLLHLRYDRHIMATNGQSGGAKRSTGANGEDRIIEVPCGTAVYDADTGEFITDITEHGQQVMLLQGGRGGHGNTFFKTATNQAPRYAQPGEPAQERMVIMQLKMLADVGLVGFPNAGKSTLLSVLTAAKPKIANYPFTTLEPNLGIVAYRDKRSFVMADIPGIIEGASSGKGLGLRFLRHIERNALLLFMIPADTDNIAKEYEILSRELVAYNEELAQKRKVLAITKCDLIDEELCEMLREELPTGLPVVFISAVAQQGLEELKDTLWKELSKETLHEPDSIVRQALDLTSLTWDEEDDLFPASIEDDEDEEGLDDIDFDLEIEYDNEGDDAPDQL</sequence>
<dbReference type="EC" id="3.6.5.-" evidence="1"/>
<dbReference type="EMBL" id="AP009380">
    <property type="protein sequence ID" value="BAG33332.1"/>
    <property type="molecule type" value="Genomic_DNA"/>
</dbReference>
<dbReference type="SMR" id="B2RIY7"/>
<dbReference type="GeneID" id="29256032"/>
<dbReference type="KEGG" id="pgn:PGN_0813"/>
<dbReference type="eggNOG" id="COG0536">
    <property type="taxonomic scope" value="Bacteria"/>
</dbReference>
<dbReference type="HOGENOM" id="CLU_011747_2_3_10"/>
<dbReference type="OrthoDB" id="9807318at2"/>
<dbReference type="BioCyc" id="PGIN431947:G1G2V-891-MONOMER"/>
<dbReference type="Proteomes" id="UP000008842">
    <property type="component" value="Chromosome"/>
</dbReference>
<dbReference type="GO" id="GO:0005737">
    <property type="term" value="C:cytoplasm"/>
    <property type="evidence" value="ECO:0007669"/>
    <property type="project" value="UniProtKB-SubCell"/>
</dbReference>
<dbReference type="GO" id="GO:0005525">
    <property type="term" value="F:GTP binding"/>
    <property type="evidence" value="ECO:0007669"/>
    <property type="project" value="UniProtKB-UniRule"/>
</dbReference>
<dbReference type="GO" id="GO:0003924">
    <property type="term" value="F:GTPase activity"/>
    <property type="evidence" value="ECO:0007669"/>
    <property type="project" value="UniProtKB-UniRule"/>
</dbReference>
<dbReference type="GO" id="GO:0000287">
    <property type="term" value="F:magnesium ion binding"/>
    <property type="evidence" value="ECO:0007669"/>
    <property type="project" value="InterPro"/>
</dbReference>
<dbReference type="GO" id="GO:0042254">
    <property type="term" value="P:ribosome biogenesis"/>
    <property type="evidence" value="ECO:0007669"/>
    <property type="project" value="UniProtKB-UniRule"/>
</dbReference>
<dbReference type="CDD" id="cd01898">
    <property type="entry name" value="Obg"/>
    <property type="match status" value="1"/>
</dbReference>
<dbReference type="FunFam" id="2.70.210.12:FF:000001">
    <property type="entry name" value="GTPase Obg"/>
    <property type="match status" value="1"/>
</dbReference>
<dbReference type="Gene3D" id="2.70.210.12">
    <property type="entry name" value="GTP1/OBG domain"/>
    <property type="match status" value="1"/>
</dbReference>
<dbReference type="Gene3D" id="3.40.50.300">
    <property type="entry name" value="P-loop containing nucleotide triphosphate hydrolases"/>
    <property type="match status" value="1"/>
</dbReference>
<dbReference type="HAMAP" id="MF_01454">
    <property type="entry name" value="GTPase_Obg"/>
    <property type="match status" value="1"/>
</dbReference>
<dbReference type="InterPro" id="IPR031167">
    <property type="entry name" value="G_OBG"/>
</dbReference>
<dbReference type="InterPro" id="IPR006073">
    <property type="entry name" value="GTP-bd"/>
</dbReference>
<dbReference type="InterPro" id="IPR014100">
    <property type="entry name" value="GTP-bd_Obg/CgtA"/>
</dbReference>
<dbReference type="InterPro" id="IPR006074">
    <property type="entry name" value="GTP1-OBG_CS"/>
</dbReference>
<dbReference type="InterPro" id="IPR006169">
    <property type="entry name" value="GTP1_OBG_dom"/>
</dbReference>
<dbReference type="InterPro" id="IPR036726">
    <property type="entry name" value="GTP1_OBG_dom_sf"/>
</dbReference>
<dbReference type="InterPro" id="IPR045086">
    <property type="entry name" value="OBG_GTPase"/>
</dbReference>
<dbReference type="InterPro" id="IPR027417">
    <property type="entry name" value="P-loop_NTPase"/>
</dbReference>
<dbReference type="NCBIfam" id="TIGR02729">
    <property type="entry name" value="Obg_CgtA"/>
    <property type="match status" value="1"/>
</dbReference>
<dbReference type="NCBIfam" id="NF008955">
    <property type="entry name" value="PRK12297.1"/>
    <property type="match status" value="1"/>
</dbReference>
<dbReference type="NCBIfam" id="NF008956">
    <property type="entry name" value="PRK12299.1"/>
    <property type="match status" value="1"/>
</dbReference>
<dbReference type="PANTHER" id="PTHR11702">
    <property type="entry name" value="DEVELOPMENTALLY REGULATED GTP-BINDING PROTEIN-RELATED"/>
    <property type="match status" value="1"/>
</dbReference>
<dbReference type="PANTHER" id="PTHR11702:SF31">
    <property type="entry name" value="MITOCHONDRIAL RIBOSOME-ASSOCIATED GTPASE 2"/>
    <property type="match status" value="1"/>
</dbReference>
<dbReference type="Pfam" id="PF01018">
    <property type="entry name" value="GTP1_OBG"/>
    <property type="match status" value="1"/>
</dbReference>
<dbReference type="Pfam" id="PF01926">
    <property type="entry name" value="MMR_HSR1"/>
    <property type="match status" value="1"/>
</dbReference>
<dbReference type="PIRSF" id="PIRSF002401">
    <property type="entry name" value="GTP_bd_Obg/CgtA"/>
    <property type="match status" value="1"/>
</dbReference>
<dbReference type="PRINTS" id="PR00326">
    <property type="entry name" value="GTP1OBG"/>
</dbReference>
<dbReference type="SUPFAM" id="SSF82051">
    <property type="entry name" value="Obg GTP-binding protein N-terminal domain"/>
    <property type="match status" value="1"/>
</dbReference>
<dbReference type="SUPFAM" id="SSF52540">
    <property type="entry name" value="P-loop containing nucleoside triphosphate hydrolases"/>
    <property type="match status" value="1"/>
</dbReference>
<dbReference type="PROSITE" id="PS51710">
    <property type="entry name" value="G_OBG"/>
    <property type="match status" value="1"/>
</dbReference>
<dbReference type="PROSITE" id="PS00905">
    <property type="entry name" value="GTP1_OBG"/>
    <property type="match status" value="1"/>
</dbReference>
<dbReference type="PROSITE" id="PS51883">
    <property type="entry name" value="OBG"/>
    <property type="match status" value="1"/>
</dbReference>